<proteinExistence type="evidence at protein level"/>
<keyword id="KW-0002">3D-structure</keyword>
<keyword id="KW-0903">Direct protein sequencing</keyword>
<keyword id="KW-0325">Glycoprotein</keyword>
<keyword id="KW-0391">Immunity</keyword>
<keyword id="KW-0399">Innate immunity</keyword>
<keyword id="KW-0964">Secreted</keyword>
<keyword id="KW-0732">Signal</keyword>
<dbReference type="EMBL" id="AF532603">
    <property type="protein sequence ID" value="AAM95970.1"/>
    <property type="molecule type" value="mRNA"/>
</dbReference>
<dbReference type="PDB" id="2KHA">
    <property type="method" value="NMR"/>
    <property type="chains" value="A=18-135"/>
</dbReference>
<dbReference type="PDB" id="3AQY">
    <property type="method" value="X-ray"/>
    <property type="resolution" value="1.58 A"/>
    <property type="chains" value="A/B=24-127"/>
</dbReference>
<dbReference type="PDB" id="3AQZ">
    <property type="method" value="X-ray"/>
    <property type="resolution" value="2.20 A"/>
    <property type="chains" value="A/B=24-127"/>
</dbReference>
<dbReference type="PDBsum" id="2KHA"/>
<dbReference type="PDBsum" id="3AQY"/>
<dbReference type="PDBsum" id="3AQZ"/>
<dbReference type="BMRB" id="Q8MU95"/>
<dbReference type="SMR" id="Q8MU95"/>
<dbReference type="CAZy" id="CBM39">
    <property type="family name" value="Carbohydrate-Binding Module Family 39"/>
</dbReference>
<dbReference type="CAZy" id="GH16">
    <property type="family name" value="Glycoside Hydrolase Family 16"/>
</dbReference>
<dbReference type="EvolutionaryTrace" id="Q8MU95"/>
<dbReference type="GO" id="GO:0005576">
    <property type="term" value="C:extracellular region"/>
    <property type="evidence" value="ECO:0000314"/>
    <property type="project" value="UniProtKB"/>
</dbReference>
<dbReference type="GO" id="GO:0001872">
    <property type="term" value="F:(1-&gt;3)-beta-D-glucan binding"/>
    <property type="evidence" value="ECO:0000314"/>
    <property type="project" value="UniProtKB"/>
</dbReference>
<dbReference type="GO" id="GO:0004553">
    <property type="term" value="F:hydrolase activity, hydrolyzing O-glycosyl compounds"/>
    <property type="evidence" value="ECO:0007669"/>
    <property type="project" value="InterPro"/>
</dbReference>
<dbReference type="GO" id="GO:0001530">
    <property type="term" value="F:lipopolysaccharide binding"/>
    <property type="evidence" value="ECO:0000314"/>
    <property type="project" value="UniProtKB"/>
</dbReference>
<dbReference type="GO" id="GO:0001875">
    <property type="term" value="F:lipopolysaccharide immune receptor activity"/>
    <property type="evidence" value="ECO:0000314"/>
    <property type="project" value="UniProtKB"/>
</dbReference>
<dbReference type="GO" id="GO:0070891">
    <property type="term" value="F:lipoteichoic acid binding"/>
    <property type="evidence" value="ECO:0000314"/>
    <property type="project" value="UniProtKB"/>
</dbReference>
<dbReference type="GO" id="GO:0038187">
    <property type="term" value="F:pattern recognition receptor activity"/>
    <property type="evidence" value="ECO:0000314"/>
    <property type="project" value="UniProtKB"/>
</dbReference>
<dbReference type="GO" id="GO:0001873">
    <property type="term" value="F:polysaccharide immune receptor activity"/>
    <property type="evidence" value="ECO:0000314"/>
    <property type="project" value="UniProtKB"/>
</dbReference>
<dbReference type="GO" id="GO:0005975">
    <property type="term" value="P:carbohydrate metabolic process"/>
    <property type="evidence" value="ECO:0007669"/>
    <property type="project" value="InterPro"/>
</dbReference>
<dbReference type="GO" id="GO:0002752">
    <property type="term" value="P:cell surface pattern recognition receptor signaling pathway"/>
    <property type="evidence" value="ECO:0000314"/>
    <property type="project" value="UniProtKB"/>
</dbReference>
<dbReference type="GO" id="GO:0045087">
    <property type="term" value="P:innate immune response"/>
    <property type="evidence" value="ECO:0007669"/>
    <property type="project" value="UniProtKB-KW"/>
</dbReference>
<dbReference type="GO" id="GO:0031663">
    <property type="term" value="P:lipopolysaccharide-mediated signaling pathway"/>
    <property type="evidence" value="ECO:0000314"/>
    <property type="project" value="UniProtKB"/>
</dbReference>
<dbReference type="GO" id="GO:0045088">
    <property type="term" value="P:regulation of innate immune response"/>
    <property type="evidence" value="ECO:0000314"/>
    <property type="project" value="UniProtKB"/>
</dbReference>
<dbReference type="CDD" id="cd02179">
    <property type="entry name" value="GH16_beta_GRP"/>
    <property type="match status" value="1"/>
</dbReference>
<dbReference type="FunFam" id="2.60.120.200:FF:000235">
    <property type="entry name" value="Beta-1,3-glucan-binding protein"/>
    <property type="match status" value="1"/>
</dbReference>
<dbReference type="FunFam" id="2.60.40.2140:FF:000001">
    <property type="entry name" value="Beta-1,3-glucan-binding protein"/>
    <property type="match status" value="1"/>
</dbReference>
<dbReference type="Gene3D" id="2.60.120.200">
    <property type="match status" value="1"/>
</dbReference>
<dbReference type="Gene3D" id="2.60.40.2140">
    <property type="entry name" value="Beta-1,3-glucan-recognition protein, N-terminal domain"/>
    <property type="match status" value="1"/>
</dbReference>
<dbReference type="InterPro" id="IPR031756">
    <property type="entry name" value="BGBP_N"/>
</dbReference>
<dbReference type="InterPro" id="IPR043030">
    <property type="entry name" value="BGBP_N_sf"/>
</dbReference>
<dbReference type="InterPro" id="IPR013320">
    <property type="entry name" value="ConA-like_dom_sf"/>
</dbReference>
<dbReference type="InterPro" id="IPR000757">
    <property type="entry name" value="GH16"/>
</dbReference>
<dbReference type="InterPro" id="IPR035806">
    <property type="entry name" value="GH16_GRP_C"/>
</dbReference>
<dbReference type="InterPro" id="IPR050546">
    <property type="entry name" value="Glycosyl_Hydrlase_16"/>
</dbReference>
<dbReference type="PANTHER" id="PTHR10963">
    <property type="entry name" value="GLYCOSYL HYDROLASE-RELATED"/>
    <property type="match status" value="1"/>
</dbReference>
<dbReference type="PANTHER" id="PTHR10963:SF60">
    <property type="entry name" value="GRAM-NEGATIVE BACTERIA-BINDING PROTEIN 1-RELATED"/>
    <property type="match status" value="1"/>
</dbReference>
<dbReference type="Pfam" id="PF15886">
    <property type="entry name" value="CBM39"/>
    <property type="match status" value="1"/>
</dbReference>
<dbReference type="SUPFAM" id="SSF49899">
    <property type="entry name" value="Concanavalin A-like lectins/glucanases"/>
    <property type="match status" value="1"/>
</dbReference>
<dbReference type="PROSITE" id="PS51969">
    <property type="entry name" value="CBM39"/>
    <property type="match status" value="1"/>
</dbReference>
<dbReference type="PROSITE" id="PS51762">
    <property type="entry name" value="GH16_2"/>
    <property type="match status" value="1"/>
</dbReference>
<reference evidence="13 14" key="1">
    <citation type="journal article" date="2003" name="Insect Biochem. Mol. Biol.">
        <title>cDNA cloning, purification, properties and function of a beta-1,3-glucan recognition protein from a pyralid moth, Plodia interpunctella.</title>
        <authorList>
            <person name="Fabrick J.A."/>
            <person name="Baker J.E."/>
            <person name="Kanost M.R."/>
        </authorList>
    </citation>
    <scope>NUCLEOTIDE SEQUENCE [MRNA]</scope>
    <scope>PROTEIN SEQUENCE OF 21-30</scope>
    <scope>FUNCTION</scope>
    <scope>SUBUNIT</scope>
    <scope>SUBCELLULAR LOCATION</scope>
    <scope>TISSUE SPECIFICITY</scope>
    <scope>DEVELOPMENTAL STAGE</scope>
    <scope>PTM</scope>
    <source>
        <strain evidence="14">HD198</strain>
        <tissue evidence="5">Larva</tissue>
        <tissue evidence="5">Larval plasma</tissue>
    </source>
</reference>
<reference key="2">
    <citation type="journal article" date="2004" name="J. Biol. Chem.">
        <title>Innate immunity in a pyralid moth: functional evaluation of domains from a beta-1,3-glucan recognition protein.</title>
        <authorList>
            <person name="Fabrick J.A."/>
            <person name="Baker J.E."/>
            <person name="Kanost M.R."/>
        </authorList>
    </citation>
    <scope>PROTEIN SEQUENCE OF 21-26</scope>
    <scope>FUNCTION</scope>
    <scope>BIOPHYSICOCHEMICAL PROPERTIES</scope>
    <scope>REGION</scope>
    <scope>CIRCULAR DICHROISM ANALYSIS</scope>
</reference>
<reference evidence="16 17" key="3">
    <citation type="journal article" date="2011" name="J. Biol. Chem.">
        <title>Structural insights into recognition of triple-helical beta-glucans by an insect fungal receptor.</title>
        <authorList>
            <person name="Kanagawa M."/>
            <person name="Satoh T."/>
            <person name="Ikeda A."/>
            <person name="Adachi Y."/>
            <person name="Ohno N."/>
            <person name="Yamaguchi Y."/>
        </authorList>
    </citation>
    <scope>X-RAY CRYSTALLOGRAPHY (1.58 ANGSTROMS) OF 24-127 AND IN COMPLEX WITH LAMINARIHEXAOSE</scope>
    <scope>FUNCTION</scope>
    <scope>REGION</scope>
    <scope>MUTAGENESIS OF HIS-54; LEU-64; ARG-71; ASP-72; TRP-99; TYR-101 AND ARG-110</scope>
</reference>
<reference evidence="15" key="4">
    <citation type="journal article" date="2013" name="Biochemistry">
        <title>An initial event in the insect innate immune response: structural and biological studies of interactions between beta-1,3-glucan and the N-terminal domain of beta-1,3-glucan recognition protein.</title>
        <authorList>
            <person name="Dai H."/>
            <person name="Hiromasa Y."/>
            <person name="Takahashi D."/>
            <person name="VanderVelde D."/>
            <person name="Fabrick J.A."/>
            <person name="Kanost M.R."/>
            <person name="Krishnamoorthi R."/>
        </authorList>
    </citation>
    <scope>STRUCTURE BY NMR OF 18-135</scope>
    <scope>FUNCTION</scope>
    <scope>SUBUNIT</scope>
    <scope>REGION</scope>
    <scope>MUTAGENESIS OF ASP-62</scope>
</reference>
<sequence length="488" mass="55213">MFVTFICFLACLTCSYGQPRAQQYVVPSAKLEAIYPKGLRVSIPDDGFSLFAFHGKLNEEMDGLEAGHWARDITKPKEGRWTFRDRNVKLKLGDKIYFWTYVIKDGLGYRQDNGEWTVTEFVNEDGTPADTSLEPTTAPTPVRPDQPNQPIPTHRPDPPCTVSATMVDGRKSVCQGTLLFSEEFEKANLKDLANWEAEVKFPEEPDYPFNVYMVDGTLELEDGSLVLTPKLLESRFHAGILNDALDLTNRCSGQVDTTECRRQASGAQILPPVMTGKITTKNKFTFKFGRVEVRAKLPAGNWLLPEINLEPKDNVFGSRRYESGLMRVAFAKGNAVFAKKLNGGPVLADTEPFRSLLMKEKIGIDNWNRDYHNYTLIWKQDGIDMLVDGEKYGSISPGEGFYALGREHAVPHAAHWLRGSVMAPLDQYFFLSLGLRVGGVHDFADSPDKPWKNRSNKAVLNFWNDRDNWFPTWFDANLKVDYVRVYAL</sequence>
<feature type="signal peptide" evidence="1">
    <location>
        <begin position="1"/>
        <end position="17"/>
    </location>
</feature>
<feature type="chain" id="PRO_0000002823" description="Beta-1,3-glucan-binding protein">
    <location>
        <begin position="18"/>
        <end position="488"/>
    </location>
</feature>
<feature type="domain" description="CBM39" evidence="3">
    <location>
        <begin position="24"/>
        <end position="123"/>
    </location>
</feature>
<feature type="domain" description="GH16" evidence="2">
    <location>
        <begin position="144"/>
        <end position="488"/>
    </location>
</feature>
<feature type="region of interest" description="Binds to curdlan, lipopolysaccharide and lipoteichoic acid, activates the phenoloxidase cascade and is resistant to proteolytic degradation by trypsin or chymotrypsin, but is not as effective as the full-length protein in aggregation of microorganisms" evidence="6">
    <location>
        <begin position="18"/>
        <end position="198"/>
    </location>
</feature>
<feature type="region of interest" description="Binds to curdlan, laminarihexaose and laminarin. The complex formation with laminarin induces self-association of the complexes into a macro structure, likely containing six protein and three laminarin molecules. The macro structures may form a platform on a microbial surface for recruitment of downstream proteases, as a means of amplification of the initial signal of pathogen recognition for the activation of the phenoloxidase cascade" evidence="8">
    <location>
        <begin position="18"/>
        <end position="135"/>
    </location>
</feature>
<feature type="region of interest" description="Binds to laminarihexaose and laminarin" evidence="7">
    <location>
        <begin position="24"/>
        <end position="127"/>
    </location>
</feature>
<feature type="region of interest" description="Disordered" evidence="4">
    <location>
        <begin position="125"/>
        <end position="158"/>
    </location>
</feature>
<feature type="region of interest" description="Binds to laminarin, but not to curdlan, does not activate the phenoloxidase cascade, is susceptible to proteinase digestion by trypsin or chymotrypsin and does not cause aggregation of microorganisms" evidence="6">
    <location>
        <begin position="199"/>
        <end position="488"/>
    </location>
</feature>
<feature type="compositionally biased region" description="Polar residues" evidence="4">
    <location>
        <begin position="129"/>
        <end position="139"/>
    </location>
</feature>
<feature type="compositionally biased region" description="Pro residues" evidence="4">
    <location>
        <begin position="141"/>
        <end position="150"/>
    </location>
</feature>
<feature type="binding site" evidence="7 17">
    <location>
        <position position="72"/>
    </location>
    <ligand>
        <name>substrate</name>
    </ligand>
</feature>
<feature type="binding site" evidence="7 17">
    <location>
        <begin position="99"/>
        <end position="101"/>
    </location>
    <ligand>
        <name>substrate</name>
    </ligand>
</feature>
<feature type="binding site" evidence="7 17">
    <location>
        <position position="110"/>
    </location>
    <ligand>
        <name>substrate</name>
    </ligand>
</feature>
<feature type="glycosylation site" description="N-linked (GlcNAc...) asparagine" evidence="1">
    <location>
        <position position="373"/>
    </location>
</feature>
<feature type="glycosylation site" description="N-linked (GlcNAc...) asparagine" evidence="1">
    <location>
        <position position="453"/>
    </location>
</feature>
<feature type="mutagenesis site" description="Reduced binding affinity to laminarin by the N-terminal domain. Loss of binding to laminarin by the N-terminal domain; when associated with A-71." evidence="7">
    <original>H</original>
    <variation>A</variation>
    <location>
        <position position="54"/>
    </location>
</feature>
<feature type="mutagenesis site" description="No effect in binding to curdlan or laminarin by the N-terminal domain. No effect in stability of the N-terminal domain and laminarin macro structures nor in activation of the phenoloxidase cascade." evidence="8">
    <original>D</original>
    <variation>A</variation>
    <location>
        <position position="62"/>
    </location>
</feature>
<feature type="mutagenesis site" description="No effect in binding to curdlan or laminarin by the N-terminal domain. Reduced stability of the N-terminal domain and laminarin macro structures accompanied by a reduced level of activation of the phenoloxidase cascade." evidence="8">
    <original>D</original>
    <variation>K</variation>
    <location>
        <position position="62"/>
    </location>
</feature>
<feature type="mutagenesis site" description="Reduced binding affinity to laminarin by the N-terminal domain." evidence="7">
    <original>L</original>
    <variation>A</variation>
    <location>
        <position position="64"/>
    </location>
</feature>
<feature type="mutagenesis site" description="Loss of binding to laminarin by the N-terminal domain; when associated with A-54. Reduced binding affinity to laminarin by the N-terminal domain; when associated with A-110." evidence="7">
    <original>R</original>
    <variation>A</variation>
    <location>
        <position position="71"/>
    </location>
</feature>
<feature type="mutagenesis site" description="Loss of binding to laminarin by the N-terminal domain." evidence="7">
    <original>D</original>
    <variation>A</variation>
    <location>
        <position position="72"/>
    </location>
</feature>
<feature type="mutagenesis site" description="Loss of binding to laminarin by the N-terminal domain." evidence="7">
    <original>W</original>
    <variation>A</variation>
    <location>
        <position position="99"/>
    </location>
</feature>
<feature type="mutagenesis site" description="No effect in binding to laminarin by the N-terminal domain." evidence="7">
    <original>Y</original>
    <variation>A</variation>
    <location>
        <position position="101"/>
    </location>
</feature>
<feature type="mutagenesis site" description="Reduced binding affinity to laminarin by the N-terminal domain. Reduced binding affinity to laminarin by the N-terminal domain; when associated with A-71." evidence="7">
    <original>R</original>
    <variation>A</variation>
    <location>
        <position position="110"/>
    </location>
</feature>
<feature type="strand" evidence="19">
    <location>
        <begin position="30"/>
        <end position="37"/>
    </location>
</feature>
<feature type="strand" evidence="19">
    <location>
        <begin position="39"/>
        <end position="44"/>
    </location>
</feature>
<feature type="strand" evidence="19">
    <location>
        <begin position="49"/>
        <end position="59"/>
    </location>
</feature>
<feature type="strand" evidence="19">
    <location>
        <begin position="68"/>
        <end position="73"/>
    </location>
</feature>
<feature type="strand" evidence="19">
    <location>
        <begin position="80"/>
        <end position="85"/>
    </location>
</feature>
<feature type="strand" evidence="19">
    <location>
        <begin position="95"/>
        <end position="104"/>
    </location>
</feature>
<feature type="strand" evidence="19">
    <location>
        <begin position="107"/>
        <end position="117"/>
    </location>
</feature>
<feature type="strand" evidence="18">
    <location>
        <begin position="126"/>
        <end position="128"/>
    </location>
</feature>
<protein>
    <recommendedName>
        <fullName evidence="13">Beta-1,3-glucan-binding protein</fullName>
        <shortName evidence="13">BGBP</shortName>
    </recommendedName>
    <alternativeName>
        <fullName evidence="9 10 11 12">Beta-1,3-glucan recognition protein</fullName>
        <shortName evidence="9 10 11 12">BetaGRP</shortName>
    </alternativeName>
    <alternativeName>
        <fullName evidence="12">Gram-negative bacteria-binding protein</fullName>
        <shortName evidence="12">GNBP</shortName>
    </alternativeName>
    <alternativeName>
        <fullName evidence="10">PibetaGRP</fullName>
    </alternativeName>
</protein>
<organism>
    <name type="scientific">Plodia interpunctella</name>
    <name type="common">Indianmeal moth</name>
    <dbReference type="NCBI Taxonomy" id="58824"/>
    <lineage>
        <taxon>Eukaryota</taxon>
        <taxon>Metazoa</taxon>
        <taxon>Ecdysozoa</taxon>
        <taxon>Arthropoda</taxon>
        <taxon>Hexapoda</taxon>
        <taxon>Insecta</taxon>
        <taxon>Pterygota</taxon>
        <taxon>Neoptera</taxon>
        <taxon>Endopterygota</taxon>
        <taxon>Lepidoptera</taxon>
        <taxon>Glossata</taxon>
        <taxon>Ditrysia</taxon>
        <taxon>Pyraloidea</taxon>
        <taxon>Pyralidae</taxon>
        <taxon>Phycitinae</taxon>
        <taxon>Plodia</taxon>
    </lineage>
</organism>
<comment type="function">
    <text evidence="5 6 7 8">Involved in the recognition of invading microorganisms causing their aggregation (PubMed:12770576, PubMed:15084591). Activates the phenoloxidase cascade (PubMed:12770576, PubMed:15084591, PubMed:23237493). Binds specifically to beta-1,3-glucan (PubMed:12770576, PubMed:15084591, PubMed:21697086, PubMed:23237493). Binds to curdlan, a linear water-insoluble beta-1,3-glucan polysaccharide, and to laminarin, a water-soluble beta-1,3-glucan polysaccharide containing beta-1,6 branches (PubMed:15084591, PubMed:21697086, PubMed:23237493). Also binds to lipopolysaccharide and lipoteichoic acid (PubMed:15084591).</text>
</comment>
<comment type="biophysicochemical properties">
    <temperatureDependence>
        <text evidence="6">Denaturates after heat treatment at 100 degrees Celsius for 10 minutes. The N-terminal region (18-198) is thermostable and retains its ability to bind to curdlan after heat treatment at 100 degrees Celsius for 10 minutes. The C-terminal region (199-488) is heat-labile after the same treatment.</text>
    </temperatureDependence>
</comment>
<comment type="subunit">
    <text evidence="5 8">Monomer.</text>
</comment>
<comment type="subcellular location">
    <subcellularLocation>
        <location evidence="5">Secreted</location>
    </subcellularLocation>
</comment>
<comment type="tissue specificity">
    <text evidence="5">Fat body and hemolymph.</text>
</comment>
<comment type="developmental stage">
    <text evidence="5">Expression is maintained at a moderate level throughout development from embryo to adult.</text>
</comment>
<comment type="PTM">
    <text evidence="5">The N-terminus is blocked.</text>
</comment>
<comment type="similarity">
    <text evidence="13">Belongs to the insect beta-1,3-glucan binding protein family.</text>
</comment>
<accession>Q8MU95</accession>
<name>BGBP_PLOIN</name>
<evidence type="ECO:0000255" key="1"/>
<evidence type="ECO:0000255" key="2">
    <source>
        <dbReference type="PROSITE-ProRule" id="PRU01098"/>
    </source>
</evidence>
<evidence type="ECO:0000255" key="3">
    <source>
        <dbReference type="PROSITE-ProRule" id="PRU01314"/>
    </source>
</evidence>
<evidence type="ECO:0000256" key="4">
    <source>
        <dbReference type="SAM" id="MobiDB-lite"/>
    </source>
</evidence>
<evidence type="ECO:0000269" key="5">
    <source>
    </source>
</evidence>
<evidence type="ECO:0000269" key="6">
    <source>
    </source>
</evidence>
<evidence type="ECO:0000269" key="7">
    <source>
    </source>
</evidence>
<evidence type="ECO:0000269" key="8">
    <source>
    </source>
</evidence>
<evidence type="ECO:0000303" key="9">
    <source>
    </source>
</evidence>
<evidence type="ECO:0000303" key="10">
    <source>
    </source>
</evidence>
<evidence type="ECO:0000303" key="11">
    <source>
    </source>
</evidence>
<evidence type="ECO:0000303" key="12">
    <source>
    </source>
</evidence>
<evidence type="ECO:0000305" key="13"/>
<evidence type="ECO:0000312" key="14">
    <source>
        <dbReference type="EMBL" id="AAM95970.1"/>
    </source>
</evidence>
<evidence type="ECO:0007744" key="15">
    <source>
        <dbReference type="PDB" id="2KHA"/>
    </source>
</evidence>
<evidence type="ECO:0007744" key="16">
    <source>
        <dbReference type="PDB" id="3AQY"/>
    </source>
</evidence>
<evidence type="ECO:0007744" key="17">
    <source>
        <dbReference type="PDB" id="3AQZ"/>
    </source>
</evidence>
<evidence type="ECO:0007829" key="18">
    <source>
        <dbReference type="PDB" id="2KHA"/>
    </source>
</evidence>
<evidence type="ECO:0007829" key="19">
    <source>
        <dbReference type="PDB" id="3AQY"/>
    </source>
</evidence>